<evidence type="ECO:0000255" key="1">
    <source>
        <dbReference type="HAMAP-Rule" id="MF_00274"/>
    </source>
</evidence>
<evidence type="ECO:0000256" key="2">
    <source>
        <dbReference type="SAM" id="MobiDB-lite"/>
    </source>
</evidence>
<sequence>MRGGGNMQQMMKQMQKMQKKMAQEQEKLKEERIVGTAGGGMVAVTVTGHKEVVDVEIKEEAVDPDDIEMLQDLVLAATNEAMNKADELTQERLGKHTQGLNIPGM</sequence>
<reference key="1">
    <citation type="journal article" date="2008" name="Antimicrob. Agents Chemother.">
        <title>Mutated response regulator graR is responsible for phenotypic conversion of Staphylococcus aureus from heterogeneous vancomycin-intermediate resistance to vancomycin-intermediate resistance.</title>
        <authorList>
            <person name="Neoh H.-M."/>
            <person name="Cui L."/>
            <person name="Yuzawa H."/>
            <person name="Takeuchi F."/>
            <person name="Matsuo M."/>
            <person name="Hiramatsu K."/>
        </authorList>
    </citation>
    <scope>NUCLEOTIDE SEQUENCE [LARGE SCALE GENOMIC DNA]</scope>
    <source>
        <strain>Mu3 / ATCC 700698</strain>
    </source>
</reference>
<keyword id="KW-0963">Cytoplasm</keyword>
<keyword id="KW-0238">DNA-binding</keyword>
<name>Y476_STAA1</name>
<feature type="chain" id="PRO_1000003830" description="Nucleoid-associated protein SAHV_0476">
    <location>
        <begin position="1"/>
        <end position="105"/>
    </location>
</feature>
<feature type="region of interest" description="Disordered" evidence="2">
    <location>
        <begin position="1"/>
        <end position="33"/>
    </location>
</feature>
<feature type="compositionally biased region" description="Low complexity" evidence="2">
    <location>
        <begin position="7"/>
        <end position="16"/>
    </location>
</feature>
<feature type="compositionally biased region" description="Basic and acidic residues" evidence="2">
    <location>
        <begin position="21"/>
        <end position="33"/>
    </location>
</feature>
<gene>
    <name type="ordered locus">SAHV_0476</name>
</gene>
<organism>
    <name type="scientific">Staphylococcus aureus (strain Mu3 / ATCC 700698)</name>
    <dbReference type="NCBI Taxonomy" id="418127"/>
    <lineage>
        <taxon>Bacteria</taxon>
        <taxon>Bacillati</taxon>
        <taxon>Bacillota</taxon>
        <taxon>Bacilli</taxon>
        <taxon>Bacillales</taxon>
        <taxon>Staphylococcaceae</taxon>
        <taxon>Staphylococcus</taxon>
    </lineage>
</organism>
<accession>A7WYL7</accession>
<protein>
    <recommendedName>
        <fullName evidence="1">Nucleoid-associated protein SAHV_0476</fullName>
    </recommendedName>
</protein>
<dbReference type="EMBL" id="AP009324">
    <property type="protein sequence ID" value="BAF77359.1"/>
    <property type="molecule type" value="Genomic_DNA"/>
</dbReference>
<dbReference type="RefSeq" id="WP_001213992.1">
    <property type="nucleotide sequence ID" value="NZ_CTYB01000072.1"/>
</dbReference>
<dbReference type="SMR" id="A7WYL7"/>
<dbReference type="KEGG" id="saw:SAHV_0476"/>
<dbReference type="HOGENOM" id="CLU_140930_1_0_9"/>
<dbReference type="GO" id="GO:0043590">
    <property type="term" value="C:bacterial nucleoid"/>
    <property type="evidence" value="ECO:0007669"/>
    <property type="project" value="UniProtKB-UniRule"/>
</dbReference>
<dbReference type="GO" id="GO:0005829">
    <property type="term" value="C:cytosol"/>
    <property type="evidence" value="ECO:0007669"/>
    <property type="project" value="TreeGrafter"/>
</dbReference>
<dbReference type="GO" id="GO:0003677">
    <property type="term" value="F:DNA binding"/>
    <property type="evidence" value="ECO:0007669"/>
    <property type="project" value="UniProtKB-UniRule"/>
</dbReference>
<dbReference type="FunFam" id="3.30.1310.10:FF:000002">
    <property type="entry name" value="Nucleoid-associated protein IKC_06587"/>
    <property type="match status" value="1"/>
</dbReference>
<dbReference type="Gene3D" id="3.30.1310.10">
    <property type="entry name" value="Nucleoid-associated protein YbaB-like domain"/>
    <property type="match status" value="1"/>
</dbReference>
<dbReference type="HAMAP" id="MF_00274">
    <property type="entry name" value="DNA_YbaB_EbfC"/>
    <property type="match status" value="1"/>
</dbReference>
<dbReference type="InterPro" id="IPR036894">
    <property type="entry name" value="YbaB-like_sf"/>
</dbReference>
<dbReference type="InterPro" id="IPR004401">
    <property type="entry name" value="YbaB/EbfC"/>
</dbReference>
<dbReference type="NCBIfam" id="TIGR00103">
    <property type="entry name" value="DNA_YbaB_EbfC"/>
    <property type="match status" value="1"/>
</dbReference>
<dbReference type="PANTHER" id="PTHR33449">
    <property type="entry name" value="NUCLEOID-ASSOCIATED PROTEIN YBAB"/>
    <property type="match status" value="1"/>
</dbReference>
<dbReference type="PANTHER" id="PTHR33449:SF1">
    <property type="entry name" value="NUCLEOID-ASSOCIATED PROTEIN YBAB"/>
    <property type="match status" value="1"/>
</dbReference>
<dbReference type="Pfam" id="PF02575">
    <property type="entry name" value="YbaB_DNA_bd"/>
    <property type="match status" value="1"/>
</dbReference>
<dbReference type="PIRSF" id="PIRSF004555">
    <property type="entry name" value="UCP004555"/>
    <property type="match status" value="1"/>
</dbReference>
<dbReference type="SUPFAM" id="SSF82607">
    <property type="entry name" value="YbaB-like"/>
    <property type="match status" value="1"/>
</dbReference>
<proteinExistence type="inferred from homology"/>
<comment type="function">
    <text evidence="1">Binds to DNA and alters its conformation. May be involved in regulation of gene expression, nucleoid organization and DNA protection.</text>
</comment>
<comment type="subunit">
    <text evidence="1">Homodimer.</text>
</comment>
<comment type="subcellular location">
    <subcellularLocation>
        <location evidence="1">Cytoplasm</location>
        <location evidence="1">Nucleoid</location>
    </subcellularLocation>
</comment>
<comment type="similarity">
    <text evidence="1">Belongs to the YbaB/EbfC family.</text>
</comment>